<accession>Q04PT9</accession>
<feature type="chain" id="PRO_1000052430" description="Large ribosomal subunit protein uL4">
    <location>
        <begin position="1"/>
        <end position="211"/>
    </location>
</feature>
<feature type="region of interest" description="Disordered" evidence="2">
    <location>
        <begin position="44"/>
        <end position="94"/>
    </location>
</feature>
<evidence type="ECO:0000255" key="1">
    <source>
        <dbReference type="HAMAP-Rule" id="MF_01328"/>
    </source>
</evidence>
<evidence type="ECO:0000256" key="2">
    <source>
        <dbReference type="SAM" id="MobiDB-lite"/>
    </source>
</evidence>
<evidence type="ECO:0000305" key="3"/>
<gene>
    <name evidence="1" type="primary">rplD</name>
    <name type="ordered locus">LBJ_2658</name>
</gene>
<name>RL4_LEPBJ</name>
<keyword id="KW-0687">Ribonucleoprotein</keyword>
<keyword id="KW-0689">Ribosomal protein</keyword>
<keyword id="KW-0694">RNA-binding</keyword>
<keyword id="KW-0699">rRNA-binding</keyword>
<proteinExistence type="inferred from homology"/>
<protein>
    <recommendedName>
        <fullName evidence="1">Large ribosomal subunit protein uL4</fullName>
    </recommendedName>
    <alternativeName>
        <fullName evidence="3">50S ribosomal protein L4</fullName>
    </alternativeName>
</protein>
<dbReference type="EMBL" id="CP000350">
    <property type="protein sequence ID" value="ABJ77081.1"/>
    <property type="molecule type" value="Genomic_DNA"/>
</dbReference>
<dbReference type="RefSeq" id="WP_011669432.1">
    <property type="nucleotide sequence ID" value="NC_008510.1"/>
</dbReference>
<dbReference type="SMR" id="Q04PT9"/>
<dbReference type="KEGG" id="lbj:LBJ_2658"/>
<dbReference type="HOGENOM" id="CLU_041575_5_2_12"/>
<dbReference type="Proteomes" id="UP000000656">
    <property type="component" value="Chromosome 1"/>
</dbReference>
<dbReference type="GO" id="GO:1990904">
    <property type="term" value="C:ribonucleoprotein complex"/>
    <property type="evidence" value="ECO:0007669"/>
    <property type="project" value="UniProtKB-KW"/>
</dbReference>
<dbReference type="GO" id="GO:0005840">
    <property type="term" value="C:ribosome"/>
    <property type="evidence" value="ECO:0007669"/>
    <property type="project" value="UniProtKB-KW"/>
</dbReference>
<dbReference type="GO" id="GO:0019843">
    <property type="term" value="F:rRNA binding"/>
    <property type="evidence" value="ECO:0007669"/>
    <property type="project" value="UniProtKB-UniRule"/>
</dbReference>
<dbReference type="GO" id="GO:0003735">
    <property type="term" value="F:structural constituent of ribosome"/>
    <property type="evidence" value="ECO:0007669"/>
    <property type="project" value="InterPro"/>
</dbReference>
<dbReference type="GO" id="GO:0006412">
    <property type="term" value="P:translation"/>
    <property type="evidence" value="ECO:0007669"/>
    <property type="project" value="UniProtKB-UniRule"/>
</dbReference>
<dbReference type="FunFam" id="3.40.1370.10:FF:000014">
    <property type="entry name" value="50S ribosomal protein L4"/>
    <property type="match status" value="1"/>
</dbReference>
<dbReference type="Gene3D" id="3.40.1370.10">
    <property type="match status" value="1"/>
</dbReference>
<dbReference type="HAMAP" id="MF_01328_B">
    <property type="entry name" value="Ribosomal_uL4_B"/>
    <property type="match status" value="1"/>
</dbReference>
<dbReference type="InterPro" id="IPR002136">
    <property type="entry name" value="Ribosomal_uL4"/>
</dbReference>
<dbReference type="InterPro" id="IPR013005">
    <property type="entry name" value="Ribosomal_uL4-like"/>
</dbReference>
<dbReference type="InterPro" id="IPR023574">
    <property type="entry name" value="Ribosomal_uL4_dom_sf"/>
</dbReference>
<dbReference type="NCBIfam" id="TIGR03953">
    <property type="entry name" value="rplD_bact"/>
    <property type="match status" value="1"/>
</dbReference>
<dbReference type="PANTHER" id="PTHR10746">
    <property type="entry name" value="50S RIBOSOMAL PROTEIN L4"/>
    <property type="match status" value="1"/>
</dbReference>
<dbReference type="PANTHER" id="PTHR10746:SF6">
    <property type="entry name" value="LARGE RIBOSOMAL SUBUNIT PROTEIN UL4M"/>
    <property type="match status" value="1"/>
</dbReference>
<dbReference type="Pfam" id="PF00573">
    <property type="entry name" value="Ribosomal_L4"/>
    <property type="match status" value="1"/>
</dbReference>
<dbReference type="SUPFAM" id="SSF52166">
    <property type="entry name" value="Ribosomal protein L4"/>
    <property type="match status" value="1"/>
</dbReference>
<comment type="function">
    <text evidence="1">One of the primary rRNA binding proteins, this protein initially binds near the 5'-end of the 23S rRNA. It is important during the early stages of 50S assembly. It makes multiple contacts with different domains of the 23S rRNA in the assembled 50S subunit and ribosome.</text>
</comment>
<comment type="function">
    <text evidence="1">Forms part of the polypeptide exit tunnel.</text>
</comment>
<comment type="subunit">
    <text evidence="1">Part of the 50S ribosomal subunit.</text>
</comment>
<comment type="similarity">
    <text evidence="1">Belongs to the universal ribosomal protein uL4 family.</text>
</comment>
<reference key="1">
    <citation type="journal article" date="2006" name="Proc. Natl. Acad. Sci. U.S.A.">
        <title>Genome reduction in Leptospira borgpetersenii reflects limited transmission potential.</title>
        <authorList>
            <person name="Bulach D.M."/>
            <person name="Zuerner R.L."/>
            <person name="Wilson P."/>
            <person name="Seemann T."/>
            <person name="McGrath A."/>
            <person name="Cullen P.A."/>
            <person name="Davis J."/>
            <person name="Johnson M."/>
            <person name="Kuczek E."/>
            <person name="Alt D.P."/>
            <person name="Peterson-Burch B."/>
            <person name="Coppel R.L."/>
            <person name="Rood J.I."/>
            <person name="Davies J.K."/>
            <person name="Adler B."/>
        </authorList>
    </citation>
    <scope>NUCLEOTIDE SEQUENCE [LARGE SCALE GENOMIC DNA]</scope>
    <source>
        <strain>JB197</strain>
    </source>
</reference>
<organism>
    <name type="scientific">Leptospira borgpetersenii serovar Hardjo-bovis (strain JB197)</name>
    <dbReference type="NCBI Taxonomy" id="355277"/>
    <lineage>
        <taxon>Bacteria</taxon>
        <taxon>Pseudomonadati</taxon>
        <taxon>Spirochaetota</taxon>
        <taxon>Spirochaetia</taxon>
        <taxon>Leptospirales</taxon>
        <taxon>Leptospiraceae</taxon>
        <taxon>Leptospira</taxon>
    </lineage>
</organism>
<sequence length="211" mass="23388">MKAQKYSKEGKLISEIELPSALFESKLSVASIYEAIKAENANLRSGNHATKTRSEVRGGGKKPWSQKGTGHARQGSTRAPHWVGGGTVHGPQKRDYSYKVSSKLKHKAVLSILNKKAQASAVKVIEDLDPKEYSTKSFDSIFKNMNLRNTGVIGFLVQGESDFVKKSVRNIPTVKYINSKRISCRDILYNRNLVITEAALNEMLTQYGATK</sequence>